<feature type="chain" id="PRO_1000061719" description="PKHD-type hydroxylase YbiX">
    <location>
        <begin position="1"/>
        <end position="225"/>
    </location>
</feature>
<feature type="domain" description="Fe2OG dioxygenase" evidence="1">
    <location>
        <begin position="78"/>
        <end position="177"/>
    </location>
</feature>
<feature type="binding site" evidence="1">
    <location>
        <position position="96"/>
    </location>
    <ligand>
        <name>Fe cation</name>
        <dbReference type="ChEBI" id="CHEBI:24875"/>
    </ligand>
</feature>
<feature type="binding site" evidence="1">
    <location>
        <position position="98"/>
    </location>
    <ligand>
        <name>Fe cation</name>
        <dbReference type="ChEBI" id="CHEBI:24875"/>
    </ligand>
</feature>
<feature type="binding site" evidence="1">
    <location>
        <position position="158"/>
    </location>
    <ligand>
        <name>Fe cation</name>
        <dbReference type="ChEBI" id="CHEBI:24875"/>
    </ligand>
</feature>
<feature type="binding site" evidence="1">
    <location>
        <position position="168"/>
    </location>
    <ligand>
        <name>2-oxoglutarate</name>
        <dbReference type="ChEBI" id="CHEBI:16810"/>
    </ligand>
</feature>
<name>YBIX_ECOL5</name>
<sequence>MMYHIPGVLSPQDVARFREHLEQAEWVDGRVTTGAQGAQVKNNQQVDTRSALYAALQNEVLNAVNQHALFFAAALPRTLSTPLFNRYQNNETYGFHVDGAVRSHPQNGCMRTDLSATLFLSDPESYDGGELVVNDTFGQHRVKLPAGDLVLYPSSSLHCVTPVTRGVRVASFMWIQSMIRDDKKRAMLFELDNNIQSLKSHYGESEEILSLLNLYHNLLREWSEI</sequence>
<protein>
    <recommendedName>
        <fullName evidence="1">PKHD-type hydroxylase YbiX</fullName>
        <ecNumber evidence="1">1.14.11.-</ecNumber>
    </recommendedName>
</protein>
<reference key="1">
    <citation type="journal article" date="2006" name="Mol. Microbiol.">
        <title>Role of pathogenicity island-associated integrases in the genome plasticity of uropathogenic Escherichia coli strain 536.</title>
        <authorList>
            <person name="Hochhut B."/>
            <person name="Wilde C."/>
            <person name="Balling G."/>
            <person name="Middendorf B."/>
            <person name="Dobrindt U."/>
            <person name="Brzuszkiewicz E."/>
            <person name="Gottschalk G."/>
            <person name="Carniel E."/>
            <person name="Hacker J."/>
        </authorList>
    </citation>
    <scope>NUCLEOTIDE SEQUENCE [LARGE SCALE GENOMIC DNA]</scope>
    <source>
        <strain>536 / UPEC</strain>
    </source>
</reference>
<dbReference type="EC" id="1.14.11.-" evidence="1"/>
<dbReference type="EMBL" id="CP000247">
    <property type="protein sequence ID" value="ABG68837.1"/>
    <property type="molecule type" value="Genomic_DNA"/>
</dbReference>
<dbReference type="RefSeq" id="WP_000990157.1">
    <property type="nucleotide sequence ID" value="NC_008253.1"/>
</dbReference>
<dbReference type="SMR" id="Q0TJP4"/>
<dbReference type="KEGG" id="ecp:ECP_0818"/>
<dbReference type="HOGENOM" id="CLU_106663_0_0_6"/>
<dbReference type="Proteomes" id="UP000009182">
    <property type="component" value="Chromosome"/>
</dbReference>
<dbReference type="GO" id="GO:0016706">
    <property type="term" value="F:2-oxoglutarate-dependent dioxygenase activity"/>
    <property type="evidence" value="ECO:0007669"/>
    <property type="project" value="UniProtKB-UniRule"/>
</dbReference>
<dbReference type="GO" id="GO:0005506">
    <property type="term" value="F:iron ion binding"/>
    <property type="evidence" value="ECO:0007669"/>
    <property type="project" value="UniProtKB-UniRule"/>
</dbReference>
<dbReference type="GO" id="GO:0031418">
    <property type="term" value="F:L-ascorbic acid binding"/>
    <property type="evidence" value="ECO:0007669"/>
    <property type="project" value="UniProtKB-KW"/>
</dbReference>
<dbReference type="GO" id="GO:0006974">
    <property type="term" value="P:DNA damage response"/>
    <property type="evidence" value="ECO:0007669"/>
    <property type="project" value="TreeGrafter"/>
</dbReference>
<dbReference type="GO" id="GO:0006879">
    <property type="term" value="P:intracellular iron ion homeostasis"/>
    <property type="evidence" value="ECO:0007669"/>
    <property type="project" value="TreeGrafter"/>
</dbReference>
<dbReference type="FunFam" id="2.60.120.620:FF:000006">
    <property type="entry name" value="PKHD-type hydroxylase YbiX"/>
    <property type="match status" value="1"/>
</dbReference>
<dbReference type="FunFam" id="4.10.860.20:FF:000001">
    <property type="entry name" value="PKHD-type hydroxylase YbiX"/>
    <property type="match status" value="1"/>
</dbReference>
<dbReference type="Gene3D" id="2.60.120.620">
    <property type="entry name" value="q2cbj1_9rhob like domain"/>
    <property type="match status" value="1"/>
</dbReference>
<dbReference type="Gene3D" id="4.10.860.20">
    <property type="entry name" value="Rabenosyn, Rab binding domain"/>
    <property type="match status" value="1"/>
</dbReference>
<dbReference type="HAMAP" id="MF_00657">
    <property type="entry name" value="Hydroxyl_YbiX"/>
    <property type="match status" value="1"/>
</dbReference>
<dbReference type="InterPro" id="IPR005123">
    <property type="entry name" value="Oxoglu/Fe-dep_dioxygenase_dom"/>
</dbReference>
<dbReference type="InterPro" id="IPR041097">
    <property type="entry name" value="PKHD_C"/>
</dbReference>
<dbReference type="InterPro" id="IPR023550">
    <property type="entry name" value="PKHD_hydroxylase"/>
</dbReference>
<dbReference type="InterPro" id="IPR006620">
    <property type="entry name" value="Pro_4_hyd_alph"/>
</dbReference>
<dbReference type="InterPro" id="IPR044862">
    <property type="entry name" value="Pro_4_hyd_alph_FE2OG_OXY"/>
</dbReference>
<dbReference type="NCBIfam" id="NF003972">
    <property type="entry name" value="PRK05467.1-1"/>
    <property type="match status" value="1"/>
</dbReference>
<dbReference type="NCBIfam" id="NF003974">
    <property type="entry name" value="PRK05467.1-3"/>
    <property type="match status" value="1"/>
</dbReference>
<dbReference type="NCBIfam" id="NF003975">
    <property type="entry name" value="PRK05467.1-4"/>
    <property type="match status" value="1"/>
</dbReference>
<dbReference type="PANTHER" id="PTHR41536">
    <property type="entry name" value="PKHD-TYPE HYDROXYLASE YBIX"/>
    <property type="match status" value="1"/>
</dbReference>
<dbReference type="PANTHER" id="PTHR41536:SF1">
    <property type="entry name" value="PKHD-TYPE HYDROXYLASE YBIX"/>
    <property type="match status" value="1"/>
</dbReference>
<dbReference type="Pfam" id="PF13640">
    <property type="entry name" value="2OG-FeII_Oxy_3"/>
    <property type="match status" value="1"/>
</dbReference>
<dbReference type="Pfam" id="PF18331">
    <property type="entry name" value="PKHD_C"/>
    <property type="match status" value="1"/>
</dbReference>
<dbReference type="SMART" id="SM00702">
    <property type="entry name" value="P4Hc"/>
    <property type="match status" value="1"/>
</dbReference>
<dbReference type="SUPFAM" id="SSF51197">
    <property type="entry name" value="Clavaminate synthase-like"/>
    <property type="match status" value="1"/>
</dbReference>
<dbReference type="PROSITE" id="PS51471">
    <property type="entry name" value="FE2OG_OXY"/>
    <property type="match status" value="1"/>
</dbReference>
<keyword id="KW-0223">Dioxygenase</keyword>
<keyword id="KW-0408">Iron</keyword>
<keyword id="KW-0479">Metal-binding</keyword>
<keyword id="KW-0560">Oxidoreductase</keyword>
<keyword id="KW-0847">Vitamin C</keyword>
<gene>
    <name evidence="1" type="primary">ybiX</name>
    <name type="ordered locus">ECP_0818</name>
</gene>
<accession>Q0TJP4</accession>
<evidence type="ECO:0000255" key="1">
    <source>
        <dbReference type="HAMAP-Rule" id="MF_00657"/>
    </source>
</evidence>
<proteinExistence type="inferred from homology"/>
<comment type="cofactor">
    <cofactor evidence="1">
        <name>Fe(2+)</name>
        <dbReference type="ChEBI" id="CHEBI:29033"/>
    </cofactor>
    <text evidence="1">Binds 1 Fe(2+) ion per subunit.</text>
</comment>
<comment type="cofactor">
    <cofactor evidence="1">
        <name>L-ascorbate</name>
        <dbReference type="ChEBI" id="CHEBI:38290"/>
    </cofactor>
</comment>
<organism>
    <name type="scientific">Escherichia coli O6:K15:H31 (strain 536 / UPEC)</name>
    <dbReference type="NCBI Taxonomy" id="362663"/>
    <lineage>
        <taxon>Bacteria</taxon>
        <taxon>Pseudomonadati</taxon>
        <taxon>Pseudomonadota</taxon>
        <taxon>Gammaproteobacteria</taxon>
        <taxon>Enterobacterales</taxon>
        <taxon>Enterobacteriaceae</taxon>
        <taxon>Escherichia</taxon>
    </lineage>
</organism>